<proteinExistence type="inferred from homology"/>
<name>PTS3B_PEDPE</name>
<comment type="function">
    <text evidence="1">The phosphoenolpyruvate-dependent sugar phosphotransferase system (sugar PTS), a major carbohydrate active transport system, catalyzes the phosphorylation of incoming sugar substrates concomitantly with their translocation across the cell membrane (By similarity). This system is involved in sucrose transport (By similarity).</text>
</comment>
<comment type="catalytic activity">
    <reaction evidence="1">
        <text>N(pros)-phospho-L-histidyl-[protein](out) + sucrose = sucrose 6(G)-phosphate(in) + L-histidyl-[protein]</text>
        <dbReference type="Rhea" id="RHEA:49236"/>
        <dbReference type="Rhea" id="RHEA-COMP:9745"/>
        <dbReference type="Rhea" id="RHEA-COMP:9746"/>
        <dbReference type="ChEBI" id="CHEBI:17992"/>
        <dbReference type="ChEBI" id="CHEBI:29979"/>
        <dbReference type="ChEBI" id="CHEBI:64837"/>
        <dbReference type="ChEBI" id="CHEBI:91002"/>
        <dbReference type="EC" id="2.7.1.211"/>
    </reaction>
</comment>
<comment type="subcellular location">
    <subcellularLocation>
        <location evidence="1">Cell membrane</location>
        <topology evidence="2">Multi-pass membrane protein</topology>
    </subcellularLocation>
</comment>
<comment type="domain">
    <text evidence="4">The PTS EIIB type-1 domain is phosphorylated by phospho-EIIA on a cysteinyl residue. Then, it transfers the phosphoryl group to the sugar substrate concomitantly with the sugar uptake processed by the PTS EIIC type-1 domain.</text>
</comment>
<comment type="domain">
    <text evidence="5">The EIIC domain type-1 forms the PTS system translocation channel and contains the specific substrate-binding site.</text>
</comment>
<comment type="domain">
    <text evidence="3">The PTS EIIA type-1 domain is phosphorylated by phospho-HPr on a histidyl residue. Then, it transfers the phosphoryl group to the PTS EIIB type-1 domain.</text>
</comment>
<feature type="chain" id="PRO_0000186675" description="PTS system sucrose-specific EIIBCA component">
    <location>
        <begin position="1"/>
        <end position="651"/>
    </location>
</feature>
<feature type="transmembrane region" description="Helical" evidence="5">
    <location>
        <begin position="109"/>
        <end position="129"/>
    </location>
</feature>
<feature type="transmembrane region" description="Helical" evidence="5">
    <location>
        <begin position="158"/>
        <end position="178"/>
    </location>
</feature>
<feature type="transmembrane region" description="Helical" evidence="5">
    <location>
        <begin position="182"/>
        <end position="202"/>
    </location>
</feature>
<feature type="transmembrane region" description="Helical" evidence="5">
    <location>
        <begin position="204"/>
        <end position="224"/>
    </location>
</feature>
<feature type="transmembrane region" description="Helical" evidence="5">
    <location>
        <begin position="226"/>
        <end position="246"/>
    </location>
</feature>
<feature type="transmembrane region" description="Helical" evidence="5">
    <location>
        <begin position="264"/>
        <end position="284"/>
    </location>
</feature>
<feature type="transmembrane region" description="Helical" evidence="5">
    <location>
        <begin position="303"/>
        <end position="323"/>
    </location>
</feature>
<feature type="transmembrane region" description="Helical" evidence="5">
    <location>
        <begin position="345"/>
        <end position="365"/>
    </location>
</feature>
<feature type="transmembrane region" description="Helical" evidence="5">
    <location>
        <begin position="404"/>
        <end position="424"/>
    </location>
</feature>
<feature type="transmembrane region" description="Helical" evidence="5">
    <location>
        <begin position="444"/>
        <end position="464"/>
    </location>
</feature>
<feature type="domain" description="PTS EIIB type-1" evidence="4">
    <location>
        <begin position="3"/>
        <end position="86"/>
    </location>
</feature>
<feature type="domain" description="PTS EIIC type-1" evidence="5">
    <location>
        <begin position="121"/>
        <end position="481"/>
    </location>
</feature>
<feature type="domain" description="PTS EIIA type-1" evidence="3">
    <location>
        <begin position="510"/>
        <end position="614"/>
    </location>
</feature>
<feature type="active site" description="Phosphocysteine intermediate; for EIIB activity" evidence="4">
    <location>
        <position position="25"/>
    </location>
</feature>
<feature type="active site" description="Tele-phosphohistidine intermediate; for EIIA activity" evidence="3">
    <location>
        <position position="562"/>
    </location>
</feature>
<organism>
    <name type="scientific">Pediococcus pentosaceus</name>
    <dbReference type="NCBI Taxonomy" id="1255"/>
    <lineage>
        <taxon>Bacteria</taxon>
        <taxon>Bacillati</taxon>
        <taxon>Bacillota</taxon>
        <taxon>Bacilli</taxon>
        <taxon>Lactobacillales</taxon>
        <taxon>Lactobacillaceae</taxon>
        <taxon>Pediococcus</taxon>
    </lineage>
</organism>
<reference key="1">
    <citation type="submission" date="1994-04" db="EMBL/GenBank/DDBJ databases">
        <title>The sucrose and raffinose operons of Pediococcus pentosaceus PPE1.0.</title>
        <authorList>
            <person name="Leenhouts K.K.J."/>
            <person name="Bolhuis A.A."/>
            <person name="Kok J.J."/>
            <person name="Venema G.G."/>
        </authorList>
    </citation>
    <scope>NUCLEOTIDE SEQUENCE [GENOMIC DNA]</scope>
    <source>
        <strain>PPE1.0</strain>
    </source>
</reference>
<protein>
    <recommendedName>
        <fullName evidence="1">PTS system sucrose-specific EIIBCA component</fullName>
    </recommendedName>
    <alternativeName>
        <fullName>EIIBCA-Scr</fullName>
        <shortName>EII-Scr</shortName>
    </alternativeName>
    <domain>
        <recommendedName>
            <fullName>Sucrose-specific phosphotransferase enzyme IIB component</fullName>
            <ecNumber evidence="1">2.7.1.211</ecNumber>
        </recommendedName>
        <alternativeName>
            <fullName>PTS system sucrose-specific EIIB component</fullName>
        </alternativeName>
    </domain>
    <domain>
        <recommendedName>
            <fullName>Sucrose permease IIC component</fullName>
        </recommendedName>
        <alternativeName>
            <fullName>PTS system sucrose-specific EIIC component</fullName>
        </alternativeName>
    </domain>
    <domain>
        <recommendedName>
            <fullName>Sucrose-specific phosphotransferase enzyme IIA component</fullName>
        </recommendedName>
        <alternativeName>
            <fullName>PTS system sucrose-specific EIIA component</fullName>
        </alternativeName>
    </domain>
</protein>
<dbReference type="EC" id="2.7.1.211" evidence="1"/>
<dbReference type="EMBL" id="Z32771">
    <property type="protein sequence ID" value="CAA83668.1"/>
    <property type="molecule type" value="Genomic_DNA"/>
</dbReference>
<dbReference type="EMBL" id="L32093">
    <property type="protein sequence ID" value="AAA25567.1"/>
    <property type="molecule type" value="Genomic_DNA"/>
</dbReference>
<dbReference type="PIR" id="S44257">
    <property type="entry name" value="S44257"/>
</dbReference>
<dbReference type="SMR" id="P43470"/>
<dbReference type="GO" id="GO:0005886">
    <property type="term" value="C:plasma membrane"/>
    <property type="evidence" value="ECO:0007669"/>
    <property type="project" value="UniProtKB-SubCell"/>
</dbReference>
<dbReference type="GO" id="GO:0016301">
    <property type="term" value="F:kinase activity"/>
    <property type="evidence" value="ECO:0007669"/>
    <property type="project" value="UniProtKB-KW"/>
</dbReference>
<dbReference type="GO" id="GO:0022878">
    <property type="term" value="F:protein-N(PI)-phosphohistidine-sucrose phosphotransferase system transporter activity"/>
    <property type="evidence" value="ECO:0007669"/>
    <property type="project" value="RHEA"/>
</dbReference>
<dbReference type="GO" id="GO:0090589">
    <property type="term" value="F:protein-phosphocysteine-trehalose phosphotransferase system transporter activity"/>
    <property type="evidence" value="ECO:0007669"/>
    <property type="project" value="TreeGrafter"/>
</dbReference>
<dbReference type="GO" id="GO:0009401">
    <property type="term" value="P:phosphoenolpyruvate-dependent sugar phosphotransferase system"/>
    <property type="evidence" value="ECO:0007669"/>
    <property type="project" value="UniProtKB-KW"/>
</dbReference>
<dbReference type="GO" id="GO:0015771">
    <property type="term" value="P:trehalose transport"/>
    <property type="evidence" value="ECO:0007669"/>
    <property type="project" value="TreeGrafter"/>
</dbReference>
<dbReference type="CDD" id="cd00210">
    <property type="entry name" value="PTS_IIA_glc"/>
    <property type="match status" value="1"/>
</dbReference>
<dbReference type="CDD" id="cd00212">
    <property type="entry name" value="PTS_IIB_glc"/>
    <property type="match status" value="1"/>
</dbReference>
<dbReference type="FunFam" id="2.70.70.10:FF:000001">
    <property type="entry name" value="PTS system glucose-specific IIA component"/>
    <property type="match status" value="1"/>
</dbReference>
<dbReference type="FunFam" id="3.30.1360.60:FF:000001">
    <property type="entry name" value="PTS system glucose-specific IIBC component PtsG"/>
    <property type="match status" value="1"/>
</dbReference>
<dbReference type="Gene3D" id="2.70.70.10">
    <property type="entry name" value="Glucose Permease (Domain IIA)"/>
    <property type="match status" value="1"/>
</dbReference>
<dbReference type="Gene3D" id="3.30.1360.60">
    <property type="entry name" value="Glucose permease domain IIB"/>
    <property type="match status" value="1"/>
</dbReference>
<dbReference type="InterPro" id="IPR011055">
    <property type="entry name" value="Dup_hybrid_motif"/>
</dbReference>
<dbReference type="InterPro" id="IPR036878">
    <property type="entry name" value="Glu_permease_IIB"/>
</dbReference>
<dbReference type="InterPro" id="IPR018113">
    <property type="entry name" value="PTrfase_EIIB_Cys"/>
</dbReference>
<dbReference type="InterPro" id="IPR001127">
    <property type="entry name" value="PTS_EIIA_1_perm"/>
</dbReference>
<dbReference type="InterPro" id="IPR003352">
    <property type="entry name" value="PTS_EIIC"/>
</dbReference>
<dbReference type="InterPro" id="IPR013013">
    <property type="entry name" value="PTS_EIIC_1"/>
</dbReference>
<dbReference type="InterPro" id="IPR001996">
    <property type="entry name" value="PTS_IIB_1"/>
</dbReference>
<dbReference type="InterPro" id="IPR010973">
    <property type="entry name" value="PTS_IIBC_sucr"/>
</dbReference>
<dbReference type="InterPro" id="IPR050558">
    <property type="entry name" value="PTS_Sugar-Specific_Components"/>
</dbReference>
<dbReference type="NCBIfam" id="TIGR00826">
    <property type="entry name" value="EIIB_glc"/>
    <property type="match status" value="1"/>
</dbReference>
<dbReference type="NCBIfam" id="TIGR00830">
    <property type="entry name" value="PTBA"/>
    <property type="match status" value="1"/>
</dbReference>
<dbReference type="NCBIfam" id="TIGR01996">
    <property type="entry name" value="PTS-II-BC-sucr"/>
    <property type="match status" value="1"/>
</dbReference>
<dbReference type="PANTHER" id="PTHR30175">
    <property type="entry name" value="PHOSPHOTRANSFERASE SYSTEM TRANSPORT PROTEIN"/>
    <property type="match status" value="1"/>
</dbReference>
<dbReference type="PANTHER" id="PTHR30175:SF4">
    <property type="entry name" value="PTS SYSTEM TREHALOSE-SPECIFIC EIIBC COMPONENT"/>
    <property type="match status" value="1"/>
</dbReference>
<dbReference type="Pfam" id="PF00358">
    <property type="entry name" value="PTS_EIIA_1"/>
    <property type="match status" value="1"/>
</dbReference>
<dbReference type="Pfam" id="PF00367">
    <property type="entry name" value="PTS_EIIB"/>
    <property type="match status" value="1"/>
</dbReference>
<dbReference type="Pfam" id="PF02378">
    <property type="entry name" value="PTS_EIIC"/>
    <property type="match status" value="1"/>
</dbReference>
<dbReference type="SUPFAM" id="SSF51261">
    <property type="entry name" value="Duplicated hybrid motif"/>
    <property type="match status" value="1"/>
</dbReference>
<dbReference type="SUPFAM" id="SSF55604">
    <property type="entry name" value="Glucose permease domain IIB"/>
    <property type="match status" value="1"/>
</dbReference>
<dbReference type="PROSITE" id="PS51093">
    <property type="entry name" value="PTS_EIIA_TYPE_1"/>
    <property type="match status" value="1"/>
</dbReference>
<dbReference type="PROSITE" id="PS00371">
    <property type="entry name" value="PTS_EIIA_TYPE_1_HIS"/>
    <property type="match status" value="1"/>
</dbReference>
<dbReference type="PROSITE" id="PS51098">
    <property type="entry name" value="PTS_EIIB_TYPE_1"/>
    <property type="match status" value="1"/>
</dbReference>
<dbReference type="PROSITE" id="PS01035">
    <property type="entry name" value="PTS_EIIB_TYPE_1_CYS"/>
    <property type="match status" value="1"/>
</dbReference>
<dbReference type="PROSITE" id="PS51103">
    <property type="entry name" value="PTS_EIIC_TYPE_1"/>
    <property type="match status" value="1"/>
</dbReference>
<keyword id="KW-1003">Cell membrane</keyword>
<keyword id="KW-0418">Kinase</keyword>
<keyword id="KW-0472">Membrane</keyword>
<keyword id="KW-0598">Phosphotransferase system</keyword>
<keyword id="KW-0762">Sugar transport</keyword>
<keyword id="KW-0808">Transferase</keyword>
<keyword id="KW-0812">Transmembrane</keyword>
<keyword id="KW-1133">Transmembrane helix</keyword>
<keyword id="KW-0813">Transport</keyword>
<sequence>MNHQEVADRVLNAIGKNNIQAAAHCATRLRLVIKDESKIDQQALDDDADVKGTFETNGQYQIIIGPGDVDKVYDALIVKTGLKEVTPDDIKAVAAAGQNKNPLMDFLKVLSDIFIPIVPALVAGGLLMALNNVLTAEHLFMAKSVVEVYPGLKGIAEMINAMASAPFTFLPILLGFSATKRFGGNPYLGATMGMIMVLPSLVNGYSVATTMAAGKMVYWNVFGLHVAQAGYQGQVLPVLGVAFILATLEKFFHKHIKGAFDFTFTPMFAIVITGFLTFTIVGPVLRTVSDALTNGLVGLYNSTGWIGMGIFGLLYSAIVITGLHQTFPAIETQLLANVAKTGGSFIFPVASMANIGQGAATLAIFFATKSQKQKALTSSAGVSALLGITEPAIFGVNLKMKFPFVFAAIASGIASAFLGLFHVLSVAMGPASVIGFISIASKSIPAFMLSAVISFVVAFIPTFIYAKRTLGDDRDQVKSPAPTSTVINVNDEIISAPVTGASESLKQVNDQVFSAEIMGKGAAIVPSSDQVVAPADGVITVTYDSHHAYGIKTTAGAEILIHLGLDTVNLNGEHFTTNVQKGDTVHQGDLLGTFDIAALKAANYDPTVMLIVTNTANYANVERLKVTNVQAGEQLVALTAPAASSVAATTV</sequence>
<evidence type="ECO:0000250" key="1">
    <source>
        <dbReference type="UniProtKB" id="P12655"/>
    </source>
</evidence>
<evidence type="ECO:0000255" key="2"/>
<evidence type="ECO:0000255" key="3">
    <source>
        <dbReference type="PROSITE-ProRule" id="PRU00416"/>
    </source>
</evidence>
<evidence type="ECO:0000255" key="4">
    <source>
        <dbReference type="PROSITE-ProRule" id="PRU00421"/>
    </source>
</evidence>
<evidence type="ECO:0000255" key="5">
    <source>
        <dbReference type="PROSITE-ProRule" id="PRU00426"/>
    </source>
</evidence>
<accession>P43470</accession>
<gene>
    <name type="primary">scrA</name>
</gene>